<protein>
    <recommendedName>
        <fullName evidence="1">Aspartate--tRNA ligase</fullName>
        <ecNumber evidence="1">6.1.1.12</ecNumber>
    </recommendedName>
    <alternativeName>
        <fullName evidence="1">Aspartyl-tRNA synthetase</fullName>
        <shortName evidence="1">AspRS</shortName>
    </alternativeName>
</protein>
<gene>
    <name evidence="1" type="primary">aspS</name>
    <name type="ordered locus">LCA_0864</name>
</gene>
<evidence type="ECO:0000255" key="1">
    <source>
        <dbReference type="HAMAP-Rule" id="MF_00044"/>
    </source>
</evidence>
<keyword id="KW-0030">Aminoacyl-tRNA synthetase</keyword>
<keyword id="KW-0067">ATP-binding</keyword>
<keyword id="KW-0963">Cytoplasm</keyword>
<keyword id="KW-0436">Ligase</keyword>
<keyword id="KW-0547">Nucleotide-binding</keyword>
<keyword id="KW-0648">Protein biosynthesis</keyword>
<keyword id="KW-1185">Reference proteome</keyword>
<accession>Q38XB6</accession>
<name>SYD_LATSS</name>
<dbReference type="EC" id="6.1.1.12" evidence="1"/>
<dbReference type="EMBL" id="CR936503">
    <property type="protein sequence ID" value="CAI55165.1"/>
    <property type="molecule type" value="Genomic_DNA"/>
</dbReference>
<dbReference type="RefSeq" id="WP_011374567.1">
    <property type="nucleotide sequence ID" value="NC_007576.1"/>
</dbReference>
<dbReference type="SMR" id="Q38XB6"/>
<dbReference type="STRING" id="314315.LCA_0864"/>
<dbReference type="KEGG" id="lsa:LCA_0864"/>
<dbReference type="eggNOG" id="COG0173">
    <property type="taxonomic scope" value="Bacteria"/>
</dbReference>
<dbReference type="HOGENOM" id="CLU_014330_3_2_9"/>
<dbReference type="OrthoDB" id="9802326at2"/>
<dbReference type="Proteomes" id="UP000002707">
    <property type="component" value="Chromosome"/>
</dbReference>
<dbReference type="GO" id="GO:0005737">
    <property type="term" value="C:cytoplasm"/>
    <property type="evidence" value="ECO:0007669"/>
    <property type="project" value="UniProtKB-SubCell"/>
</dbReference>
<dbReference type="GO" id="GO:0004815">
    <property type="term" value="F:aspartate-tRNA ligase activity"/>
    <property type="evidence" value="ECO:0007669"/>
    <property type="project" value="UniProtKB-UniRule"/>
</dbReference>
<dbReference type="GO" id="GO:0005524">
    <property type="term" value="F:ATP binding"/>
    <property type="evidence" value="ECO:0007669"/>
    <property type="project" value="UniProtKB-UniRule"/>
</dbReference>
<dbReference type="GO" id="GO:0140096">
    <property type="term" value="F:catalytic activity, acting on a protein"/>
    <property type="evidence" value="ECO:0007669"/>
    <property type="project" value="UniProtKB-ARBA"/>
</dbReference>
<dbReference type="GO" id="GO:0003676">
    <property type="term" value="F:nucleic acid binding"/>
    <property type="evidence" value="ECO:0007669"/>
    <property type="project" value="InterPro"/>
</dbReference>
<dbReference type="GO" id="GO:0016740">
    <property type="term" value="F:transferase activity"/>
    <property type="evidence" value="ECO:0007669"/>
    <property type="project" value="UniProtKB-ARBA"/>
</dbReference>
<dbReference type="GO" id="GO:0006422">
    <property type="term" value="P:aspartyl-tRNA aminoacylation"/>
    <property type="evidence" value="ECO:0007669"/>
    <property type="project" value="UniProtKB-UniRule"/>
</dbReference>
<dbReference type="CDD" id="cd00777">
    <property type="entry name" value="AspRS_core"/>
    <property type="match status" value="1"/>
</dbReference>
<dbReference type="CDD" id="cd04317">
    <property type="entry name" value="EcAspRS_like_N"/>
    <property type="match status" value="1"/>
</dbReference>
<dbReference type="Gene3D" id="3.30.930.10">
    <property type="entry name" value="Bira Bifunctional Protein, Domain 2"/>
    <property type="match status" value="1"/>
</dbReference>
<dbReference type="Gene3D" id="3.30.1360.30">
    <property type="entry name" value="GAD-like domain"/>
    <property type="match status" value="1"/>
</dbReference>
<dbReference type="Gene3D" id="2.40.50.140">
    <property type="entry name" value="Nucleic acid-binding proteins"/>
    <property type="match status" value="1"/>
</dbReference>
<dbReference type="HAMAP" id="MF_00044">
    <property type="entry name" value="Asp_tRNA_synth_type1"/>
    <property type="match status" value="1"/>
</dbReference>
<dbReference type="InterPro" id="IPR004364">
    <property type="entry name" value="Aa-tRNA-synt_II"/>
</dbReference>
<dbReference type="InterPro" id="IPR006195">
    <property type="entry name" value="aa-tRNA-synth_II"/>
</dbReference>
<dbReference type="InterPro" id="IPR045864">
    <property type="entry name" value="aa-tRNA-synth_II/BPL/LPL"/>
</dbReference>
<dbReference type="InterPro" id="IPR004524">
    <property type="entry name" value="Asp-tRNA-ligase_1"/>
</dbReference>
<dbReference type="InterPro" id="IPR047089">
    <property type="entry name" value="Asp-tRNA-ligase_1_N"/>
</dbReference>
<dbReference type="InterPro" id="IPR002312">
    <property type="entry name" value="Asp/Asn-tRNA-synth_IIb"/>
</dbReference>
<dbReference type="InterPro" id="IPR047090">
    <property type="entry name" value="AspRS_core"/>
</dbReference>
<dbReference type="InterPro" id="IPR004115">
    <property type="entry name" value="GAD-like_sf"/>
</dbReference>
<dbReference type="InterPro" id="IPR029351">
    <property type="entry name" value="GAD_dom"/>
</dbReference>
<dbReference type="InterPro" id="IPR012340">
    <property type="entry name" value="NA-bd_OB-fold"/>
</dbReference>
<dbReference type="InterPro" id="IPR004365">
    <property type="entry name" value="NA-bd_OB_tRNA"/>
</dbReference>
<dbReference type="NCBIfam" id="TIGR00459">
    <property type="entry name" value="aspS_bact"/>
    <property type="match status" value="1"/>
</dbReference>
<dbReference type="NCBIfam" id="NF001750">
    <property type="entry name" value="PRK00476.1"/>
    <property type="match status" value="1"/>
</dbReference>
<dbReference type="PANTHER" id="PTHR22594:SF5">
    <property type="entry name" value="ASPARTATE--TRNA LIGASE, MITOCHONDRIAL"/>
    <property type="match status" value="1"/>
</dbReference>
<dbReference type="PANTHER" id="PTHR22594">
    <property type="entry name" value="ASPARTYL/LYSYL-TRNA SYNTHETASE"/>
    <property type="match status" value="1"/>
</dbReference>
<dbReference type="Pfam" id="PF02938">
    <property type="entry name" value="GAD"/>
    <property type="match status" value="1"/>
</dbReference>
<dbReference type="Pfam" id="PF00152">
    <property type="entry name" value="tRNA-synt_2"/>
    <property type="match status" value="1"/>
</dbReference>
<dbReference type="Pfam" id="PF01336">
    <property type="entry name" value="tRNA_anti-codon"/>
    <property type="match status" value="1"/>
</dbReference>
<dbReference type="PRINTS" id="PR01042">
    <property type="entry name" value="TRNASYNTHASP"/>
</dbReference>
<dbReference type="SUPFAM" id="SSF55681">
    <property type="entry name" value="Class II aaRS and biotin synthetases"/>
    <property type="match status" value="1"/>
</dbReference>
<dbReference type="SUPFAM" id="SSF55261">
    <property type="entry name" value="GAD domain-like"/>
    <property type="match status" value="1"/>
</dbReference>
<dbReference type="SUPFAM" id="SSF50249">
    <property type="entry name" value="Nucleic acid-binding proteins"/>
    <property type="match status" value="1"/>
</dbReference>
<dbReference type="PROSITE" id="PS50862">
    <property type="entry name" value="AA_TRNA_LIGASE_II"/>
    <property type="match status" value="1"/>
</dbReference>
<feature type="chain" id="PRO_0000235532" description="Aspartate--tRNA ligase">
    <location>
        <begin position="1"/>
        <end position="590"/>
    </location>
</feature>
<feature type="region of interest" description="Aspartate" evidence="1">
    <location>
        <begin position="199"/>
        <end position="202"/>
    </location>
</feature>
<feature type="binding site" evidence="1">
    <location>
        <position position="175"/>
    </location>
    <ligand>
        <name>L-aspartate</name>
        <dbReference type="ChEBI" id="CHEBI:29991"/>
    </ligand>
</feature>
<feature type="binding site" evidence="1">
    <location>
        <begin position="221"/>
        <end position="223"/>
    </location>
    <ligand>
        <name>ATP</name>
        <dbReference type="ChEBI" id="CHEBI:30616"/>
    </ligand>
</feature>
<feature type="binding site" evidence="1">
    <location>
        <position position="221"/>
    </location>
    <ligand>
        <name>L-aspartate</name>
        <dbReference type="ChEBI" id="CHEBI:29991"/>
    </ligand>
</feature>
<feature type="binding site" evidence="1">
    <location>
        <position position="230"/>
    </location>
    <ligand>
        <name>ATP</name>
        <dbReference type="ChEBI" id="CHEBI:30616"/>
    </ligand>
</feature>
<feature type="binding site" evidence="1">
    <location>
        <position position="448"/>
    </location>
    <ligand>
        <name>L-aspartate</name>
        <dbReference type="ChEBI" id="CHEBI:29991"/>
    </ligand>
</feature>
<feature type="binding site" evidence="1">
    <location>
        <position position="482"/>
    </location>
    <ligand>
        <name>ATP</name>
        <dbReference type="ChEBI" id="CHEBI:30616"/>
    </ligand>
</feature>
<feature type="binding site" evidence="1">
    <location>
        <position position="489"/>
    </location>
    <ligand>
        <name>L-aspartate</name>
        <dbReference type="ChEBI" id="CHEBI:29991"/>
    </ligand>
</feature>
<feature type="binding site" evidence="1">
    <location>
        <begin position="534"/>
        <end position="537"/>
    </location>
    <ligand>
        <name>ATP</name>
        <dbReference type="ChEBI" id="CHEBI:30616"/>
    </ligand>
</feature>
<comment type="function">
    <text evidence="1">Catalyzes the attachment of L-aspartate to tRNA(Asp) in a two-step reaction: L-aspartate is first activated by ATP to form Asp-AMP and then transferred to the acceptor end of tRNA(Asp).</text>
</comment>
<comment type="catalytic activity">
    <reaction evidence="1">
        <text>tRNA(Asp) + L-aspartate + ATP = L-aspartyl-tRNA(Asp) + AMP + diphosphate</text>
        <dbReference type="Rhea" id="RHEA:19649"/>
        <dbReference type="Rhea" id="RHEA-COMP:9660"/>
        <dbReference type="Rhea" id="RHEA-COMP:9678"/>
        <dbReference type="ChEBI" id="CHEBI:29991"/>
        <dbReference type="ChEBI" id="CHEBI:30616"/>
        <dbReference type="ChEBI" id="CHEBI:33019"/>
        <dbReference type="ChEBI" id="CHEBI:78442"/>
        <dbReference type="ChEBI" id="CHEBI:78516"/>
        <dbReference type="ChEBI" id="CHEBI:456215"/>
        <dbReference type="EC" id="6.1.1.12"/>
    </reaction>
</comment>
<comment type="subunit">
    <text evidence="1">Homodimer.</text>
</comment>
<comment type="subcellular location">
    <subcellularLocation>
        <location evidence="1">Cytoplasm</location>
    </subcellularLocation>
</comment>
<comment type="similarity">
    <text evidence="1">Belongs to the class-II aminoacyl-tRNA synthetase family. Type 1 subfamily.</text>
</comment>
<organism>
    <name type="scientific">Latilactobacillus sakei subsp. sakei (strain 23K)</name>
    <name type="common">Lactobacillus sakei subsp. sakei</name>
    <dbReference type="NCBI Taxonomy" id="314315"/>
    <lineage>
        <taxon>Bacteria</taxon>
        <taxon>Bacillati</taxon>
        <taxon>Bacillota</taxon>
        <taxon>Bacilli</taxon>
        <taxon>Lactobacillales</taxon>
        <taxon>Lactobacillaceae</taxon>
        <taxon>Latilactobacillus</taxon>
    </lineage>
</organism>
<reference key="1">
    <citation type="journal article" date="2005" name="Nat. Biotechnol.">
        <title>The complete genome sequence of the meat-borne lactic acid bacterium Lactobacillus sakei 23K.</title>
        <authorList>
            <person name="Chaillou S."/>
            <person name="Champomier-Verges M.-C."/>
            <person name="Cornet M."/>
            <person name="Crutz-Le Coq A.-M."/>
            <person name="Dudez A.-M."/>
            <person name="Martin V."/>
            <person name="Beaufils S."/>
            <person name="Darbon-Rongere E."/>
            <person name="Bossy R."/>
            <person name="Loux V."/>
            <person name="Zagorec M."/>
        </authorList>
    </citation>
    <scope>NUCLEOTIDE SEQUENCE [LARGE SCALE GENOMIC DNA]</scope>
    <source>
        <strain>23K</strain>
    </source>
</reference>
<sequence length="590" mass="67144">MKTRTTYSGLVDETFVGQTVTLHGWVQKRRSLGNLIFVDLRDREGLVQLVFNQDNADILALANTLRNEYVIEVTGMVQARDEAAINPDMKTGKVEVIVSELTILNEAKNLPFEIKDGITTSEETKLKYRYLDLRRPEMQQAIIRRSQITQAAHKYLDNNGFLNIETPDLTRSTPEGARDYLVPSRVYPGSFYALPQSPQVFKQLLMDAGFDRYYQMARCFRDEDLRGDRQPEFTQIDVETSFMSAEEIQEQAEGIIKQVMQDVMHIDVPTPFKRMKWQEAMDRYGSDKPDIRFDLEIQDLTEMMKTSSFKVFSDTANSGNLVRAIVVPEGAAKYSRKMLDEQTEYIKRYGARGMAWVKVVDGELTGPAAKFLKEQEAELLSALSAKDGDLVLFVADKFQVVCDSLGYLRKHFAHDMGLVDESQFAYLWVVDWPLFEYDEGFGRWIAAHHPFTRPNDSDVDLLETDPHKAHAQSYDIILNGYELGGGSLRIYQRDIQERMFKALGISPETYEEQFGHLLSAMDYGFPPHGGFAIGLDRFAMLLAGRDNIRDVIAFPKNSHASEPMTNAPSRVAPAQLDELGLEVEPEVEKD</sequence>
<proteinExistence type="inferred from homology"/>